<feature type="chain" id="PRO_0000174006" description="Small ribosomal subunit protein eS30z/eS30y/eS30x">
    <location>
        <begin position="1"/>
        <end position="62"/>
    </location>
</feature>
<feature type="region of interest" description="Disordered" evidence="1">
    <location>
        <begin position="1"/>
        <end position="38"/>
    </location>
</feature>
<feature type="compositionally biased region" description="Basic residues" evidence="1">
    <location>
        <begin position="25"/>
        <end position="38"/>
    </location>
</feature>
<feature type="sequence conflict" description="In Ref. 7; CAA81482." evidence="3" ref="7">
    <original>QTP</original>
    <variation>RHQ</variation>
    <location>
        <begin position="17"/>
        <end position="19"/>
    </location>
</feature>
<keyword id="KW-1185">Reference proteome</keyword>
<keyword id="KW-0687">Ribonucleoprotein</keyword>
<keyword id="KW-0689">Ribosomal protein</keyword>
<proteinExistence type="inferred from homology"/>
<reference key="1">
    <citation type="journal article" date="1999" name="Nature">
        <title>Sequence and analysis of chromosome 2 of the plant Arabidopsis thaliana.</title>
        <authorList>
            <person name="Lin X."/>
            <person name="Kaul S."/>
            <person name="Rounsley S.D."/>
            <person name="Shea T.P."/>
            <person name="Benito M.-I."/>
            <person name="Town C.D."/>
            <person name="Fujii C.Y."/>
            <person name="Mason T.M."/>
            <person name="Bowman C.L."/>
            <person name="Barnstead M.E."/>
            <person name="Feldblyum T.V."/>
            <person name="Buell C.R."/>
            <person name="Ketchum K.A."/>
            <person name="Lee J.J."/>
            <person name="Ronning C.M."/>
            <person name="Koo H.L."/>
            <person name="Moffat K.S."/>
            <person name="Cronin L.A."/>
            <person name="Shen M."/>
            <person name="Pai G."/>
            <person name="Van Aken S."/>
            <person name="Umayam L."/>
            <person name="Tallon L.J."/>
            <person name="Gill J.E."/>
            <person name="Adams M.D."/>
            <person name="Carrera A.J."/>
            <person name="Creasy T.H."/>
            <person name="Goodman H.M."/>
            <person name="Somerville C.R."/>
            <person name="Copenhaver G.P."/>
            <person name="Preuss D."/>
            <person name="Nierman W.C."/>
            <person name="White O."/>
            <person name="Eisen J.A."/>
            <person name="Salzberg S.L."/>
            <person name="Fraser C.M."/>
            <person name="Venter J.C."/>
        </authorList>
    </citation>
    <scope>NUCLEOTIDE SEQUENCE [LARGE SCALE GENOMIC DNA] (RPS30A)</scope>
    <source>
        <strain>cv. Columbia</strain>
    </source>
</reference>
<reference key="2">
    <citation type="journal article" date="1999" name="Nature">
        <title>Sequence and analysis of chromosome 4 of the plant Arabidopsis thaliana.</title>
        <authorList>
            <person name="Mayer K.F.X."/>
            <person name="Schueller C."/>
            <person name="Wambutt R."/>
            <person name="Murphy G."/>
            <person name="Volckaert G."/>
            <person name="Pohl T."/>
            <person name="Duesterhoeft A."/>
            <person name="Stiekema W."/>
            <person name="Entian K.-D."/>
            <person name="Terryn N."/>
            <person name="Harris B."/>
            <person name="Ansorge W."/>
            <person name="Brandt P."/>
            <person name="Grivell L.A."/>
            <person name="Rieger M."/>
            <person name="Weichselgartner M."/>
            <person name="de Simone V."/>
            <person name="Obermaier B."/>
            <person name="Mache R."/>
            <person name="Mueller M."/>
            <person name="Kreis M."/>
            <person name="Delseny M."/>
            <person name="Puigdomenech P."/>
            <person name="Watson M."/>
            <person name="Schmidtheini T."/>
            <person name="Reichert B."/>
            <person name="Portetelle D."/>
            <person name="Perez-Alonso M."/>
            <person name="Boutry M."/>
            <person name="Bancroft I."/>
            <person name="Vos P."/>
            <person name="Hoheisel J."/>
            <person name="Zimmermann W."/>
            <person name="Wedler H."/>
            <person name="Ridley P."/>
            <person name="Langham S.-A."/>
            <person name="McCullagh B."/>
            <person name="Bilham L."/>
            <person name="Robben J."/>
            <person name="van der Schueren J."/>
            <person name="Grymonprez B."/>
            <person name="Chuang Y.-J."/>
            <person name="Vandenbussche F."/>
            <person name="Braeken M."/>
            <person name="Weltjens I."/>
            <person name="Voet M."/>
            <person name="Bastiaens I."/>
            <person name="Aert R."/>
            <person name="Defoor E."/>
            <person name="Weitzenegger T."/>
            <person name="Bothe G."/>
            <person name="Ramsperger U."/>
            <person name="Hilbert H."/>
            <person name="Braun M."/>
            <person name="Holzer E."/>
            <person name="Brandt A."/>
            <person name="Peters S."/>
            <person name="van Staveren M."/>
            <person name="Dirkse W."/>
            <person name="Mooijman P."/>
            <person name="Klein Lankhorst R."/>
            <person name="Rose M."/>
            <person name="Hauf J."/>
            <person name="Koetter P."/>
            <person name="Berneiser S."/>
            <person name="Hempel S."/>
            <person name="Feldpausch M."/>
            <person name="Lamberth S."/>
            <person name="Van den Daele H."/>
            <person name="De Keyser A."/>
            <person name="Buysshaert C."/>
            <person name="Gielen J."/>
            <person name="Villarroel R."/>
            <person name="De Clercq R."/>
            <person name="van Montagu M."/>
            <person name="Rogers J."/>
            <person name="Cronin A."/>
            <person name="Quail M.A."/>
            <person name="Bray-Allen S."/>
            <person name="Clark L."/>
            <person name="Doggett J."/>
            <person name="Hall S."/>
            <person name="Kay M."/>
            <person name="Lennard N."/>
            <person name="McLay K."/>
            <person name="Mayes R."/>
            <person name="Pettett A."/>
            <person name="Rajandream M.A."/>
            <person name="Lyne M."/>
            <person name="Benes V."/>
            <person name="Rechmann S."/>
            <person name="Borkova D."/>
            <person name="Bloecker H."/>
            <person name="Scharfe M."/>
            <person name="Grimm M."/>
            <person name="Loehnert T.-H."/>
            <person name="Dose S."/>
            <person name="de Haan M."/>
            <person name="Maarse A.C."/>
            <person name="Schaefer M."/>
            <person name="Mueller-Auer S."/>
            <person name="Gabel C."/>
            <person name="Fuchs M."/>
            <person name="Fartmann B."/>
            <person name="Granderath K."/>
            <person name="Dauner D."/>
            <person name="Herzl A."/>
            <person name="Neumann S."/>
            <person name="Argiriou A."/>
            <person name="Vitale D."/>
            <person name="Liguori R."/>
            <person name="Piravandi E."/>
            <person name="Massenet O."/>
            <person name="Quigley F."/>
            <person name="Clabauld G."/>
            <person name="Muendlein A."/>
            <person name="Felber R."/>
            <person name="Schnabl S."/>
            <person name="Hiller R."/>
            <person name="Schmidt W."/>
            <person name="Lecharny A."/>
            <person name="Aubourg S."/>
            <person name="Chefdor F."/>
            <person name="Cooke R."/>
            <person name="Berger C."/>
            <person name="Monfort A."/>
            <person name="Casacuberta E."/>
            <person name="Gibbons T."/>
            <person name="Weber N."/>
            <person name="Vandenbol M."/>
            <person name="Bargues M."/>
            <person name="Terol J."/>
            <person name="Torres A."/>
            <person name="Perez-Perez A."/>
            <person name="Purnelle B."/>
            <person name="Bent E."/>
            <person name="Johnson S."/>
            <person name="Tacon D."/>
            <person name="Jesse T."/>
            <person name="Heijnen L."/>
            <person name="Schwarz S."/>
            <person name="Scholler P."/>
            <person name="Heber S."/>
            <person name="Francs P."/>
            <person name="Bielke C."/>
            <person name="Frishman D."/>
            <person name="Haase D."/>
            <person name="Lemcke K."/>
            <person name="Mewes H.-W."/>
            <person name="Stocker S."/>
            <person name="Zaccaria P."/>
            <person name="Bevan M."/>
            <person name="Wilson R.K."/>
            <person name="de la Bastide M."/>
            <person name="Habermann K."/>
            <person name="Parnell L."/>
            <person name="Dedhia N."/>
            <person name="Gnoj L."/>
            <person name="Schutz K."/>
            <person name="Huang E."/>
            <person name="Spiegel L."/>
            <person name="Sekhon M."/>
            <person name="Murray J."/>
            <person name="Sheet P."/>
            <person name="Cordes M."/>
            <person name="Abu-Threideh J."/>
            <person name="Stoneking T."/>
            <person name="Kalicki J."/>
            <person name="Graves T."/>
            <person name="Harmon G."/>
            <person name="Edwards J."/>
            <person name="Latreille P."/>
            <person name="Courtney L."/>
            <person name="Cloud J."/>
            <person name="Abbott A."/>
            <person name="Scott K."/>
            <person name="Johnson D."/>
            <person name="Minx P."/>
            <person name="Bentley D."/>
            <person name="Fulton B."/>
            <person name="Miller N."/>
            <person name="Greco T."/>
            <person name="Kemp K."/>
            <person name="Kramer J."/>
            <person name="Fulton L."/>
            <person name="Mardis E."/>
            <person name="Dante M."/>
            <person name="Pepin K."/>
            <person name="Hillier L.W."/>
            <person name="Nelson J."/>
            <person name="Spieth J."/>
            <person name="Ryan E."/>
            <person name="Andrews S."/>
            <person name="Geisel C."/>
            <person name="Layman D."/>
            <person name="Du H."/>
            <person name="Ali J."/>
            <person name="Berghoff A."/>
            <person name="Jones K."/>
            <person name="Drone K."/>
            <person name="Cotton M."/>
            <person name="Joshu C."/>
            <person name="Antonoiu B."/>
            <person name="Zidanic M."/>
            <person name="Strong C."/>
            <person name="Sun H."/>
            <person name="Lamar B."/>
            <person name="Yordan C."/>
            <person name="Ma P."/>
            <person name="Zhong J."/>
            <person name="Preston R."/>
            <person name="Vil D."/>
            <person name="Shekher M."/>
            <person name="Matero A."/>
            <person name="Shah R."/>
            <person name="Swaby I.K."/>
            <person name="O'Shaughnessy A."/>
            <person name="Rodriguez M."/>
            <person name="Hoffman J."/>
            <person name="Till S."/>
            <person name="Granat S."/>
            <person name="Shohdy N."/>
            <person name="Hasegawa A."/>
            <person name="Hameed A."/>
            <person name="Lodhi M."/>
            <person name="Johnson A."/>
            <person name="Chen E."/>
            <person name="Marra M.A."/>
            <person name="Martienssen R."/>
            <person name="McCombie W.R."/>
        </authorList>
    </citation>
    <scope>NUCLEOTIDE SEQUENCE [LARGE SCALE GENOMIC DNA] (RPS30B)</scope>
    <source>
        <strain>cv. Columbia</strain>
    </source>
</reference>
<reference key="3">
    <citation type="journal article" date="1998" name="DNA Res.">
        <title>Structural analysis of Arabidopsis thaliana chromosome 5. VI. Sequence features of the regions of 1,367,185 bp covered by 19 physically assigned P1 and TAC clones.</title>
        <authorList>
            <person name="Kotani H."/>
            <person name="Nakamura Y."/>
            <person name="Sato S."/>
            <person name="Asamizu E."/>
            <person name="Kaneko T."/>
            <person name="Miyajima N."/>
            <person name="Tabata S."/>
        </authorList>
    </citation>
    <scope>NUCLEOTIDE SEQUENCE [LARGE SCALE GENOMIC DNA] (RPS30C)</scope>
    <source>
        <strain>cv. Columbia</strain>
    </source>
</reference>
<reference key="4">
    <citation type="journal article" date="2017" name="Plant J.">
        <title>Araport11: a complete reannotation of the Arabidopsis thaliana reference genome.</title>
        <authorList>
            <person name="Cheng C.Y."/>
            <person name="Krishnakumar V."/>
            <person name="Chan A.P."/>
            <person name="Thibaud-Nissen F."/>
            <person name="Schobel S."/>
            <person name="Town C.D."/>
        </authorList>
    </citation>
    <scope>GENOME REANNOTATION</scope>
    <source>
        <strain>cv. Columbia</strain>
    </source>
</reference>
<reference key="5">
    <citation type="journal article" date="2003" name="Science">
        <title>Empirical analysis of transcriptional activity in the Arabidopsis genome.</title>
        <authorList>
            <person name="Yamada K."/>
            <person name="Lim J."/>
            <person name="Dale J.M."/>
            <person name="Chen H."/>
            <person name="Shinn P."/>
            <person name="Palm C.J."/>
            <person name="Southwick A.M."/>
            <person name="Wu H.C."/>
            <person name="Kim C.J."/>
            <person name="Nguyen M."/>
            <person name="Pham P.K."/>
            <person name="Cheuk R.F."/>
            <person name="Karlin-Newmann G."/>
            <person name="Liu S.X."/>
            <person name="Lam B."/>
            <person name="Sakano H."/>
            <person name="Wu T."/>
            <person name="Yu G."/>
            <person name="Miranda M."/>
            <person name="Quach H.L."/>
            <person name="Tripp M."/>
            <person name="Chang C.H."/>
            <person name="Lee J.M."/>
            <person name="Toriumi M.J."/>
            <person name="Chan M.M."/>
            <person name="Tang C.C."/>
            <person name="Onodera C.S."/>
            <person name="Deng J.M."/>
            <person name="Akiyama K."/>
            <person name="Ansari Y."/>
            <person name="Arakawa T."/>
            <person name="Banh J."/>
            <person name="Banno F."/>
            <person name="Bowser L."/>
            <person name="Brooks S.Y."/>
            <person name="Carninci P."/>
            <person name="Chao Q."/>
            <person name="Choy N."/>
            <person name="Enju A."/>
            <person name="Goldsmith A.D."/>
            <person name="Gurjal M."/>
            <person name="Hansen N.F."/>
            <person name="Hayashizaki Y."/>
            <person name="Johnson-Hopson C."/>
            <person name="Hsuan V.W."/>
            <person name="Iida K."/>
            <person name="Karnes M."/>
            <person name="Khan S."/>
            <person name="Koesema E."/>
            <person name="Ishida J."/>
            <person name="Jiang P.X."/>
            <person name="Jones T."/>
            <person name="Kawai J."/>
            <person name="Kamiya A."/>
            <person name="Meyers C."/>
            <person name="Nakajima M."/>
            <person name="Narusaka M."/>
            <person name="Seki M."/>
            <person name="Sakurai T."/>
            <person name="Satou M."/>
            <person name="Tamse R."/>
            <person name="Vaysberg M."/>
            <person name="Wallender E.K."/>
            <person name="Wong C."/>
            <person name="Yamamura Y."/>
            <person name="Yuan S."/>
            <person name="Shinozaki K."/>
            <person name="Davis R.W."/>
            <person name="Theologis A."/>
            <person name="Ecker J.R."/>
        </authorList>
    </citation>
    <scope>NUCLEOTIDE SEQUENCE [LARGE SCALE MRNA] (RPS30A AND RPS30C)</scope>
    <source>
        <strain>cv. Columbia</strain>
    </source>
</reference>
<reference key="6">
    <citation type="submission" date="2002-03" db="EMBL/GenBank/DDBJ databases">
        <title>Full-length cDNA from Arabidopsis thaliana.</title>
        <authorList>
            <person name="Brover V.V."/>
            <person name="Troukhan M.E."/>
            <person name="Alexandrov N.A."/>
            <person name="Lu Y.-P."/>
            <person name="Flavell R.B."/>
            <person name="Feldmann K.A."/>
        </authorList>
    </citation>
    <scope>NUCLEOTIDE SEQUENCE [LARGE SCALE MRNA] (RPS30A)</scope>
</reference>
<reference key="7">
    <citation type="journal article" date="1996" name="Plant J.">
        <title>Further progress towards a catalogue of all Arabidopsis genes: analysis of a set of 5000 non-redundant ESTs.</title>
        <authorList>
            <person name="Cooke R."/>
            <person name="Raynal M."/>
            <person name="Laudie M."/>
            <person name="Grellet F."/>
            <person name="Delseny M."/>
            <person name="Morris P.-C."/>
            <person name="Guerrier D."/>
            <person name="Giraudat J."/>
            <person name="Quigley F."/>
            <person name="Clabault G."/>
            <person name="Li Y.-F."/>
            <person name="Mache R."/>
            <person name="Krivitzky M."/>
            <person name="Gy I.J.-J."/>
            <person name="Kreis M."/>
            <person name="Lecharny A."/>
            <person name="Parmentier Y."/>
            <person name="Marbach J."/>
            <person name="Fleck J."/>
            <person name="Clement B."/>
            <person name="Philipps G."/>
            <person name="Herve C."/>
            <person name="Bardet C."/>
            <person name="Tremousaygue D."/>
            <person name="Lescure B."/>
            <person name="Lacomme C."/>
            <person name="Roby D."/>
            <person name="Jourjon M.-F."/>
            <person name="Chabrier P."/>
            <person name="Charpenteau J.-L."/>
            <person name="Desprez T."/>
            <person name="Amselem J."/>
            <person name="Chiapello H."/>
            <person name="Hoefte H."/>
        </authorList>
    </citation>
    <scope>NUCLEOTIDE SEQUENCE [LARGE SCALE MRNA]</scope>
    <source>
        <strain>cv. Columbia</strain>
    </source>
</reference>
<reference key="8">
    <citation type="journal article" date="2001" name="Plant Physiol.">
        <title>The organization of cytoplasmic ribosomal protein genes in the Arabidopsis genome.</title>
        <authorList>
            <person name="Barakat A."/>
            <person name="Szick-Miranda K."/>
            <person name="Chang I.-F."/>
            <person name="Guyot R."/>
            <person name="Blanc G."/>
            <person name="Cooke R."/>
            <person name="Delseny M."/>
            <person name="Bailey-Serres J."/>
        </authorList>
    </citation>
    <scope>GENE FAMILY ORGANIZATION</scope>
    <scope>NOMENCLATURE</scope>
</reference>
<reference key="9">
    <citation type="journal article" date="2023" name="Plant Cell">
        <title>An updated nomenclature for plant ribosomal protein genes.</title>
        <authorList>
            <person name="Scarpin M.R."/>
            <person name="Busche M."/>
            <person name="Martinez R.E."/>
            <person name="Harper L.C."/>
            <person name="Reiser L."/>
            <person name="Szakonyi D."/>
            <person name="Merchante C."/>
            <person name="Lan T."/>
            <person name="Xiong W."/>
            <person name="Mo B."/>
            <person name="Tang G."/>
            <person name="Chen X."/>
            <person name="Bailey-Serres J."/>
            <person name="Browning K.S."/>
            <person name="Brunkard J.O."/>
        </authorList>
    </citation>
    <scope>NOMENCLATURE</scope>
</reference>
<accession>P49689</accession>
<accession>O82203</accession>
<accession>Q9M0E4</accession>
<gene>
    <name type="primary">RPS30A</name>
    <name type="ordered locus">At2g19750</name>
    <name type="ORF">F6F22.22</name>
</gene>
<gene>
    <name type="primary">RPS30B</name>
    <name type="ordered locus">At4g29390</name>
    <name type="ORF">F17A13.210</name>
</gene>
<gene>
    <name type="primary">RPS30C</name>
    <name type="ordered locus">At5g56670</name>
    <name type="ORF">MIK19.12</name>
</gene>
<comment type="similarity">
    <text evidence="3">Belongs to the eukaryotic ribosomal protein eS30 family.</text>
</comment>
<evidence type="ECO:0000256" key="1">
    <source>
        <dbReference type="SAM" id="MobiDB-lite"/>
    </source>
</evidence>
<evidence type="ECO:0000303" key="2">
    <source>
    </source>
</evidence>
<evidence type="ECO:0000305" key="3"/>
<sequence>MGKVHGSLARAGKVRGQTPKVAKQDKKKKPRGRAHKRLQHNRRFVTAVVGFGKKRGPNSSEK</sequence>
<protein>
    <recommendedName>
        <fullName evidence="2">Small ribosomal subunit protein eS30z/eS30y/eS30x</fullName>
    </recommendedName>
    <alternativeName>
        <fullName>40S ribosomal protein S30</fullName>
    </alternativeName>
</protein>
<name>RS30_ARATH</name>
<organism>
    <name type="scientific">Arabidopsis thaliana</name>
    <name type="common">Mouse-ear cress</name>
    <dbReference type="NCBI Taxonomy" id="3702"/>
    <lineage>
        <taxon>Eukaryota</taxon>
        <taxon>Viridiplantae</taxon>
        <taxon>Streptophyta</taxon>
        <taxon>Embryophyta</taxon>
        <taxon>Tracheophyta</taxon>
        <taxon>Spermatophyta</taxon>
        <taxon>Magnoliopsida</taxon>
        <taxon>eudicotyledons</taxon>
        <taxon>Gunneridae</taxon>
        <taxon>Pentapetalae</taxon>
        <taxon>rosids</taxon>
        <taxon>malvids</taxon>
        <taxon>Brassicales</taxon>
        <taxon>Brassicaceae</taxon>
        <taxon>Camelineae</taxon>
        <taxon>Arabidopsis</taxon>
    </lineage>
</organism>
<dbReference type="EMBL" id="AC005169">
    <property type="protein sequence ID" value="AAC62141.2"/>
    <property type="molecule type" value="Genomic_DNA"/>
</dbReference>
<dbReference type="EMBL" id="AL161574">
    <property type="protein sequence ID" value="CAB79697.1"/>
    <property type="molecule type" value="Genomic_DNA"/>
</dbReference>
<dbReference type="EMBL" id="AL096692">
    <property type="status" value="NOT_ANNOTATED_CDS"/>
    <property type="molecule type" value="Genomic_DNA"/>
</dbReference>
<dbReference type="EMBL" id="AB013392">
    <property type="protein sequence ID" value="BAB09885.1"/>
    <property type="molecule type" value="Genomic_DNA"/>
</dbReference>
<dbReference type="EMBL" id="CP002685">
    <property type="protein sequence ID" value="AEC06922.1"/>
    <property type="molecule type" value="Genomic_DNA"/>
</dbReference>
<dbReference type="EMBL" id="CP002687">
    <property type="protein sequence ID" value="AEE85625.1"/>
    <property type="molecule type" value="Genomic_DNA"/>
</dbReference>
<dbReference type="EMBL" id="CP002688">
    <property type="protein sequence ID" value="AED96794.1"/>
    <property type="molecule type" value="Genomic_DNA"/>
</dbReference>
<dbReference type="EMBL" id="AY052341">
    <property type="protein sequence ID" value="AAK96533.1"/>
    <property type="molecule type" value="mRNA"/>
</dbReference>
<dbReference type="EMBL" id="AY061910">
    <property type="protein sequence ID" value="AAL31237.1"/>
    <property type="molecule type" value="mRNA"/>
</dbReference>
<dbReference type="EMBL" id="AY128361">
    <property type="protein sequence ID" value="AAM91564.1"/>
    <property type="molecule type" value="mRNA"/>
</dbReference>
<dbReference type="EMBL" id="BT006503">
    <property type="protein sequence ID" value="AAP21311.1"/>
    <property type="molecule type" value="mRNA"/>
</dbReference>
<dbReference type="EMBL" id="AY088766">
    <property type="protein sequence ID" value="AAM67081.1"/>
    <property type="molecule type" value="mRNA"/>
</dbReference>
<dbReference type="EMBL" id="Z26869">
    <property type="protein sequence ID" value="CAA81482.1"/>
    <property type="molecule type" value="mRNA"/>
</dbReference>
<dbReference type="PIR" id="F84580">
    <property type="entry name" value="F84580"/>
</dbReference>
<dbReference type="PIR" id="H85342">
    <property type="entry name" value="H85342"/>
</dbReference>
<dbReference type="RefSeq" id="NP_194668.1">
    <property type="nucleotide sequence ID" value="NM_119084.3"/>
</dbReference>
<dbReference type="RefSeq" id="NP_200478.1">
    <property type="nucleotide sequence ID" value="NM_125050.3"/>
</dbReference>
<dbReference type="RefSeq" id="NP_565458.1">
    <property type="nucleotide sequence ID" value="NM_127533.3"/>
</dbReference>
<dbReference type="SMR" id="P49689"/>
<dbReference type="BioGRID" id="14347">
    <property type="interactions" value="22"/>
</dbReference>
<dbReference type="BioGRID" id="1849">
    <property type="interactions" value="26"/>
</dbReference>
<dbReference type="BioGRID" id="21012">
    <property type="interactions" value="22"/>
</dbReference>
<dbReference type="FunCoup" id="P49689">
    <property type="interactions" value="1092"/>
</dbReference>
<dbReference type="IntAct" id="P49689">
    <property type="interactions" value="2"/>
</dbReference>
<dbReference type="STRING" id="3702.P49689"/>
<dbReference type="iPTMnet" id="P49689"/>
<dbReference type="PaxDb" id="3702-AT2G19750.1"/>
<dbReference type="ProteomicsDB" id="226882"/>
<dbReference type="EnsemblPlants" id="AT2G19750.1">
    <property type="protein sequence ID" value="AT2G19750.1"/>
    <property type="gene ID" value="AT2G19750"/>
</dbReference>
<dbReference type="EnsemblPlants" id="AT4G29390.1">
    <property type="protein sequence ID" value="AT4G29390.1"/>
    <property type="gene ID" value="AT4G29390"/>
</dbReference>
<dbReference type="EnsemblPlants" id="AT5G56670.1">
    <property type="protein sequence ID" value="AT5G56670.1"/>
    <property type="gene ID" value="AT5G56670"/>
</dbReference>
<dbReference type="GeneID" id="816494"/>
<dbReference type="GeneID" id="829060"/>
<dbReference type="GeneID" id="835768"/>
<dbReference type="Gramene" id="AT2G19750.1">
    <property type="protein sequence ID" value="AT2G19750.1"/>
    <property type="gene ID" value="AT2G19750"/>
</dbReference>
<dbReference type="Gramene" id="AT4G29390.1">
    <property type="protein sequence ID" value="AT4G29390.1"/>
    <property type="gene ID" value="AT4G29390"/>
</dbReference>
<dbReference type="Gramene" id="AT5G56670.1">
    <property type="protein sequence ID" value="AT5G56670.1"/>
    <property type="gene ID" value="AT5G56670"/>
</dbReference>
<dbReference type="KEGG" id="ath:AT2G19750"/>
<dbReference type="KEGG" id="ath:AT4G29390"/>
<dbReference type="KEGG" id="ath:AT5G56670"/>
<dbReference type="Araport" id="AT2G19750"/>
<dbReference type="Araport" id="AT4G29390"/>
<dbReference type="Araport" id="AT5G56670"/>
<dbReference type="TAIR" id="AT2G19750"/>
<dbReference type="TAIR" id="AT4G29390"/>
<dbReference type="TAIR" id="AT5G56670"/>
<dbReference type="eggNOG" id="KOG0009">
    <property type="taxonomic scope" value="Eukaryota"/>
</dbReference>
<dbReference type="HOGENOM" id="CLU_010412_5_1_1"/>
<dbReference type="InParanoid" id="P49689"/>
<dbReference type="OMA" id="YNTQNVP"/>
<dbReference type="OrthoDB" id="1627365at2759"/>
<dbReference type="PhylomeDB" id="P49689"/>
<dbReference type="PRO" id="PR:P49689"/>
<dbReference type="Proteomes" id="UP000006548">
    <property type="component" value="Chromosome 2"/>
</dbReference>
<dbReference type="Proteomes" id="UP000006548">
    <property type="component" value="Chromosome 4"/>
</dbReference>
<dbReference type="Proteomes" id="UP000006548">
    <property type="component" value="Chromosome 5"/>
</dbReference>
<dbReference type="ExpressionAtlas" id="P49689">
    <property type="expression patterns" value="baseline and differential"/>
</dbReference>
<dbReference type="GO" id="GO:0022627">
    <property type="term" value="C:cytosolic small ribosomal subunit"/>
    <property type="evidence" value="ECO:0007005"/>
    <property type="project" value="TAIR"/>
</dbReference>
<dbReference type="GO" id="GO:0005739">
    <property type="term" value="C:mitochondrion"/>
    <property type="evidence" value="ECO:0007005"/>
    <property type="project" value="TAIR"/>
</dbReference>
<dbReference type="GO" id="GO:0005730">
    <property type="term" value="C:nucleolus"/>
    <property type="evidence" value="ECO:0007005"/>
    <property type="project" value="TAIR"/>
</dbReference>
<dbReference type="GO" id="GO:0005886">
    <property type="term" value="C:plasma membrane"/>
    <property type="evidence" value="ECO:0007005"/>
    <property type="project" value="TAIR"/>
</dbReference>
<dbReference type="GO" id="GO:0009536">
    <property type="term" value="C:plastid"/>
    <property type="evidence" value="ECO:0007005"/>
    <property type="project" value="TAIR"/>
</dbReference>
<dbReference type="GO" id="GO:0003729">
    <property type="term" value="F:mRNA binding"/>
    <property type="evidence" value="ECO:0000314"/>
    <property type="project" value="TAIR"/>
</dbReference>
<dbReference type="GO" id="GO:0003735">
    <property type="term" value="F:structural constituent of ribosome"/>
    <property type="evidence" value="ECO:0000314"/>
    <property type="project" value="CAFA"/>
</dbReference>
<dbReference type="GO" id="GO:0006412">
    <property type="term" value="P:translation"/>
    <property type="evidence" value="ECO:0007669"/>
    <property type="project" value="InterPro"/>
</dbReference>
<dbReference type="InterPro" id="IPR006846">
    <property type="entry name" value="Ribosomal_eS30"/>
</dbReference>
<dbReference type="PANTHER" id="PTHR12650">
    <property type="entry name" value="40S RIBOSOMAL PROTEIN S30/UBIQUITIN-LIKE PROTEIN FUBI"/>
    <property type="match status" value="1"/>
</dbReference>
<dbReference type="PANTHER" id="PTHR12650:SF33">
    <property type="entry name" value="SMALL RIBOSOMAL SUBUNIT PROTEIN ES30Z_ES30Y_ES30X"/>
    <property type="match status" value="1"/>
</dbReference>
<dbReference type="Pfam" id="PF04758">
    <property type="entry name" value="Ribosomal_S30"/>
    <property type="match status" value="1"/>
</dbReference>